<feature type="chain" id="PRO_1000117918" description="Sulfate adenylyltransferase subunit 1">
    <location>
        <begin position="1"/>
        <end position="475"/>
    </location>
</feature>
<feature type="domain" description="tr-type G">
    <location>
        <begin position="25"/>
        <end position="240"/>
    </location>
</feature>
<feature type="region of interest" description="G1" evidence="1">
    <location>
        <begin position="34"/>
        <end position="41"/>
    </location>
</feature>
<feature type="region of interest" description="G2" evidence="1">
    <location>
        <begin position="92"/>
        <end position="96"/>
    </location>
</feature>
<feature type="region of interest" description="G3" evidence="1">
    <location>
        <begin position="113"/>
        <end position="116"/>
    </location>
</feature>
<feature type="region of interest" description="G4" evidence="1">
    <location>
        <begin position="168"/>
        <end position="171"/>
    </location>
</feature>
<feature type="region of interest" description="G5" evidence="1">
    <location>
        <begin position="206"/>
        <end position="208"/>
    </location>
</feature>
<feature type="binding site" evidence="2">
    <location>
        <begin position="34"/>
        <end position="41"/>
    </location>
    <ligand>
        <name>GTP</name>
        <dbReference type="ChEBI" id="CHEBI:37565"/>
    </ligand>
</feature>
<feature type="binding site" evidence="2">
    <location>
        <begin position="113"/>
        <end position="117"/>
    </location>
    <ligand>
        <name>GTP</name>
        <dbReference type="ChEBI" id="CHEBI:37565"/>
    </ligand>
</feature>
<feature type="binding site" evidence="2">
    <location>
        <begin position="168"/>
        <end position="171"/>
    </location>
    <ligand>
        <name>GTP</name>
        <dbReference type="ChEBI" id="CHEBI:37565"/>
    </ligand>
</feature>
<organism>
    <name type="scientific">Sodalis glossinidius (strain morsitans)</name>
    <dbReference type="NCBI Taxonomy" id="343509"/>
    <lineage>
        <taxon>Bacteria</taxon>
        <taxon>Pseudomonadati</taxon>
        <taxon>Pseudomonadota</taxon>
        <taxon>Gammaproteobacteria</taxon>
        <taxon>Enterobacterales</taxon>
        <taxon>Bruguierivoracaceae</taxon>
        <taxon>Sodalis</taxon>
    </lineage>
</organism>
<evidence type="ECO:0000250" key="1"/>
<evidence type="ECO:0000255" key="2">
    <source>
        <dbReference type="HAMAP-Rule" id="MF_00062"/>
    </source>
</evidence>
<dbReference type="EC" id="2.7.7.4" evidence="2"/>
<dbReference type="EMBL" id="AP008232">
    <property type="protein sequence ID" value="BAE73797.1"/>
    <property type="molecule type" value="Genomic_DNA"/>
</dbReference>
<dbReference type="RefSeq" id="WP_011410495.1">
    <property type="nucleotide sequence ID" value="NC_007712.1"/>
</dbReference>
<dbReference type="SMR" id="Q2NVM8"/>
<dbReference type="STRING" id="343509.SG0522"/>
<dbReference type="KEGG" id="sgl:SG0522"/>
<dbReference type="eggNOG" id="COG2895">
    <property type="taxonomic scope" value="Bacteria"/>
</dbReference>
<dbReference type="HOGENOM" id="CLU_007265_5_2_6"/>
<dbReference type="OrthoDB" id="9804504at2"/>
<dbReference type="BioCyc" id="SGLO343509:SGP1_RS04630-MONOMER"/>
<dbReference type="UniPathway" id="UPA00140">
    <property type="reaction ID" value="UER00204"/>
</dbReference>
<dbReference type="Proteomes" id="UP000001932">
    <property type="component" value="Chromosome"/>
</dbReference>
<dbReference type="GO" id="GO:0005524">
    <property type="term" value="F:ATP binding"/>
    <property type="evidence" value="ECO:0007669"/>
    <property type="project" value="UniProtKB-KW"/>
</dbReference>
<dbReference type="GO" id="GO:0005525">
    <property type="term" value="F:GTP binding"/>
    <property type="evidence" value="ECO:0007669"/>
    <property type="project" value="UniProtKB-UniRule"/>
</dbReference>
<dbReference type="GO" id="GO:0003924">
    <property type="term" value="F:GTPase activity"/>
    <property type="evidence" value="ECO:0007669"/>
    <property type="project" value="InterPro"/>
</dbReference>
<dbReference type="GO" id="GO:0097216">
    <property type="term" value="F:guanosine tetraphosphate binding"/>
    <property type="evidence" value="ECO:0007669"/>
    <property type="project" value="UniProtKB-ARBA"/>
</dbReference>
<dbReference type="GO" id="GO:0004781">
    <property type="term" value="F:sulfate adenylyltransferase (ATP) activity"/>
    <property type="evidence" value="ECO:0007669"/>
    <property type="project" value="UniProtKB-UniRule"/>
</dbReference>
<dbReference type="GO" id="GO:0070814">
    <property type="term" value="P:hydrogen sulfide biosynthetic process"/>
    <property type="evidence" value="ECO:0007669"/>
    <property type="project" value="UniProtKB-UniRule"/>
</dbReference>
<dbReference type="GO" id="GO:0000103">
    <property type="term" value="P:sulfate assimilation"/>
    <property type="evidence" value="ECO:0007669"/>
    <property type="project" value="UniProtKB-UniRule"/>
</dbReference>
<dbReference type="CDD" id="cd04166">
    <property type="entry name" value="CysN_ATPS"/>
    <property type="match status" value="1"/>
</dbReference>
<dbReference type="CDD" id="cd03695">
    <property type="entry name" value="CysN_NodQ_II"/>
    <property type="match status" value="1"/>
</dbReference>
<dbReference type="CDD" id="cd04095">
    <property type="entry name" value="CysN_NoDQ_III"/>
    <property type="match status" value="1"/>
</dbReference>
<dbReference type="FunFam" id="2.40.30.10:FF:000027">
    <property type="entry name" value="Sulfate adenylyltransferase subunit 1"/>
    <property type="match status" value="1"/>
</dbReference>
<dbReference type="FunFam" id="2.40.30.10:FF:000031">
    <property type="entry name" value="Sulfate adenylyltransferase subunit 1"/>
    <property type="match status" value="1"/>
</dbReference>
<dbReference type="FunFam" id="3.40.50.300:FF:000119">
    <property type="entry name" value="Sulfate adenylyltransferase subunit 1"/>
    <property type="match status" value="1"/>
</dbReference>
<dbReference type="Gene3D" id="3.40.50.300">
    <property type="entry name" value="P-loop containing nucleotide triphosphate hydrolases"/>
    <property type="match status" value="1"/>
</dbReference>
<dbReference type="Gene3D" id="2.40.30.10">
    <property type="entry name" value="Translation factors"/>
    <property type="match status" value="2"/>
</dbReference>
<dbReference type="HAMAP" id="MF_00062">
    <property type="entry name" value="Sulf_adenylyltr_sub1"/>
    <property type="match status" value="1"/>
</dbReference>
<dbReference type="InterPro" id="IPR041757">
    <property type="entry name" value="CysN_GTP-bd"/>
</dbReference>
<dbReference type="InterPro" id="IPR044138">
    <property type="entry name" value="CysN_II"/>
</dbReference>
<dbReference type="InterPro" id="IPR044139">
    <property type="entry name" value="CysN_NoDQ_III"/>
</dbReference>
<dbReference type="InterPro" id="IPR004161">
    <property type="entry name" value="EFTu-like_2"/>
</dbReference>
<dbReference type="InterPro" id="IPR031157">
    <property type="entry name" value="G_TR_CS"/>
</dbReference>
<dbReference type="InterPro" id="IPR054696">
    <property type="entry name" value="GTP-eEF1A_C"/>
</dbReference>
<dbReference type="InterPro" id="IPR027417">
    <property type="entry name" value="P-loop_NTPase"/>
</dbReference>
<dbReference type="InterPro" id="IPR005225">
    <property type="entry name" value="Small_GTP-bd"/>
</dbReference>
<dbReference type="InterPro" id="IPR011779">
    <property type="entry name" value="SO4_adenylTrfase_lsu"/>
</dbReference>
<dbReference type="InterPro" id="IPR000795">
    <property type="entry name" value="T_Tr_GTP-bd_dom"/>
</dbReference>
<dbReference type="InterPro" id="IPR050100">
    <property type="entry name" value="TRAFAC_GTPase_members"/>
</dbReference>
<dbReference type="InterPro" id="IPR009000">
    <property type="entry name" value="Transl_B-barrel_sf"/>
</dbReference>
<dbReference type="InterPro" id="IPR009001">
    <property type="entry name" value="Transl_elong_EF1A/Init_IF2_C"/>
</dbReference>
<dbReference type="NCBIfam" id="TIGR02034">
    <property type="entry name" value="CysN"/>
    <property type="match status" value="1"/>
</dbReference>
<dbReference type="NCBIfam" id="NF003478">
    <property type="entry name" value="PRK05124.1"/>
    <property type="match status" value="1"/>
</dbReference>
<dbReference type="NCBIfam" id="TIGR00231">
    <property type="entry name" value="small_GTP"/>
    <property type="match status" value="1"/>
</dbReference>
<dbReference type="PANTHER" id="PTHR23115">
    <property type="entry name" value="TRANSLATION FACTOR"/>
    <property type="match status" value="1"/>
</dbReference>
<dbReference type="Pfam" id="PF22594">
    <property type="entry name" value="GTP-eEF1A_C"/>
    <property type="match status" value="1"/>
</dbReference>
<dbReference type="Pfam" id="PF00009">
    <property type="entry name" value="GTP_EFTU"/>
    <property type="match status" value="1"/>
</dbReference>
<dbReference type="Pfam" id="PF03144">
    <property type="entry name" value="GTP_EFTU_D2"/>
    <property type="match status" value="1"/>
</dbReference>
<dbReference type="PRINTS" id="PR00315">
    <property type="entry name" value="ELONGATNFCT"/>
</dbReference>
<dbReference type="SUPFAM" id="SSF50465">
    <property type="entry name" value="EF-Tu/eEF-1alpha/eIF2-gamma C-terminal domain"/>
    <property type="match status" value="1"/>
</dbReference>
<dbReference type="SUPFAM" id="SSF52540">
    <property type="entry name" value="P-loop containing nucleoside triphosphate hydrolases"/>
    <property type="match status" value="1"/>
</dbReference>
<dbReference type="SUPFAM" id="SSF50447">
    <property type="entry name" value="Translation proteins"/>
    <property type="match status" value="1"/>
</dbReference>
<dbReference type="PROSITE" id="PS00301">
    <property type="entry name" value="G_TR_1"/>
    <property type="match status" value="1"/>
</dbReference>
<dbReference type="PROSITE" id="PS51722">
    <property type="entry name" value="G_TR_2"/>
    <property type="match status" value="1"/>
</dbReference>
<proteinExistence type="inferred from homology"/>
<keyword id="KW-0067">ATP-binding</keyword>
<keyword id="KW-0342">GTP-binding</keyword>
<keyword id="KW-0547">Nucleotide-binding</keyword>
<keyword id="KW-0548">Nucleotidyltransferase</keyword>
<keyword id="KW-0808">Transferase</keyword>
<accession>Q2NVM8</accession>
<comment type="function">
    <text evidence="2">With CysD forms the ATP sulfurylase (ATPS) that catalyzes the adenylation of sulfate producing adenosine 5'-phosphosulfate (APS) and diphosphate, the first enzymatic step in sulfur assimilation pathway. APS synthesis involves the formation of a high-energy phosphoric-sulfuric acid anhydride bond driven by GTP hydrolysis by CysN coupled to ATP hydrolysis by CysD.</text>
</comment>
<comment type="catalytic activity">
    <reaction evidence="2">
        <text>sulfate + ATP + H(+) = adenosine 5'-phosphosulfate + diphosphate</text>
        <dbReference type="Rhea" id="RHEA:18133"/>
        <dbReference type="ChEBI" id="CHEBI:15378"/>
        <dbReference type="ChEBI" id="CHEBI:16189"/>
        <dbReference type="ChEBI" id="CHEBI:30616"/>
        <dbReference type="ChEBI" id="CHEBI:33019"/>
        <dbReference type="ChEBI" id="CHEBI:58243"/>
        <dbReference type="EC" id="2.7.7.4"/>
    </reaction>
</comment>
<comment type="pathway">
    <text evidence="2">Sulfur metabolism; hydrogen sulfide biosynthesis; sulfite from sulfate: step 1/3.</text>
</comment>
<comment type="subunit">
    <text evidence="2">Heterodimer composed of CysD, the smaller subunit, and CysN.</text>
</comment>
<comment type="similarity">
    <text evidence="2">Belongs to the TRAFAC class translation factor GTPase superfamily. Classic translation factor GTPase family. CysN/NodQ subfamily.</text>
</comment>
<protein>
    <recommendedName>
        <fullName evidence="2">Sulfate adenylyltransferase subunit 1</fullName>
        <ecNumber evidence="2">2.7.7.4</ecNumber>
    </recommendedName>
    <alternativeName>
        <fullName evidence="2">ATP-sulfurylase large subunit</fullName>
    </alternativeName>
    <alternativeName>
        <fullName evidence="2">Sulfate adenylate transferase</fullName>
        <shortName evidence="2">SAT</shortName>
    </alternativeName>
</protein>
<sequence length="475" mass="52373">MNNAIAQQIAEQGGVEAYLHAQQHKSLLRFLTCGSVDDGKSTLIGRLLHDTRQIYEDQLSTLHTDSKRLGTQGDKLDLALLVDGLQAEREQGITIDVAYRYFSTEKRKFIIADTPGHEQYTRNMATGASTCDVAILLIDVRKGVLDQTRLHSFISTLLGIRHLVVAVNKMDLVAFDEQIFQGIRQDYLRFAEQLPVDLDITFVPLSALEGDNVAALGKAMPWYNGPTLLDVLETVEVINLNEQQPARFPVQYVNRPNLDFRGYAGTVAAGVLRVGQAVKVLPSGVTSTISRIVTFDGDLTEAWAGEAVTLVLKDEVDISRGDLLVDAGETLTEVQNAQVDVVWMTEQPLVAGQSFDIKIAGKKTRARVDNIQYQVDINTLTQRVADSLPLNGIGLVELAFDEPMILDKYADNPTTGGMIFIDRLSNVTVGAGMVRQPLQDVYREPGAYGEFELALNALVRRHFPHWGARDLLGGK</sequence>
<reference key="1">
    <citation type="journal article" date="2006" name="Genome Res.">
        <title>Massive genome erosion and functional adaptations provide insights into the symbiotic lifestyle of Sodalis glossinidius in the tsetse host.</title>
        <authorList>
            <person name="Toh H."/>
            <person name="Weiss B.L."/>
            <person name="Perkin S.A.H."/>
            <person name="Yamashita A."/>
            <person name="Oshima K."/>
            <person name="Hattori M."/>
            <person name="Aksoy S."/>
        </authorList>
    </citation>
    <scope>NUCLEOTIDE SEQUENCE [LARGE SCALE GENOMIC DNA]</scope>
    <source>
        <strain>morsitans</strain>
    </source>
</reference>
<gene>
    <name evidence="2" type="primary">cysN</name>
    <name type="ordered locus">SG0522</name>
</gene>
<name>CYSN_SODGM</name>